<accession>Q8C5P5</accession>
<accession>Q3TAL3</accession>
<accession>Q3TPT8</accession>
<accession>Q3TTI3</accession>
<accession>Q3UL73</accession>
<accession>Q4G0D1</accession>
<feature type="chain" id="PRO_0000247223" description="5'-nucleotidase domain-containing protein 1">
    <location>
        <begin position="1"/>
        <end position="467"/>
    </location>
</feature>
<feature type="active site" description="Nucleophile" evidence="1">
    <location>
        <position position="16"/>
    </location>
</feature>
<feature type="active site" description="Proton donor" evidence="1">
    <location>
        <position position="18"/>
    </location>
</feature>
<feature type="binding site" evidence="1">
    <location>
        <position position="16"/>
    </location>
    <ligand>
        <name>Mg(2+)</name>
        <dbReference type="ChEBI" id="CHEBI:18420"/>
    </ligand>
</feature>
<feature type="binding site" evidence="1">
    <location>
        <position position="18"/>
    </location>
    <ligand>
        <name>Mg(2+)</name>
        <dbReference type="ChEBI" id="CHEBI:18420"/>
    </ligand>
</feature>
<feature type="binding site" evidence="1">
    <location>
        <position position="323"/>
    </location>
    <ligand>
        <name>Mg(2+)</name>
        <dbReference type="ChEBI" id="CHEBI:18420"/>
    </ligand>
</feature>
<feature type="modified residue" description="N6-acetyllysine" evidence="2">
    <location>
        <position position="181"/>
    </location>
</feature>
<feature type="splice variant" id="VSP_019948" description="In isoform 2." evidence="3 4">
    <location>
        <position position="159"/>
    </location>
</feature>
<feature type="splice variant" id="VSP_019949" description="In isoform 3." evidence="4">
    <original>NCGFFFPEIKRNLG</original>
    <variation>PGMCPSPHDRETSP</variation>
    <location>
        <begin position="188"/>
        <end position="201"/>
    </location>
</feature>
<feature type="splice variant" id="VSP_019950" description="In isoform 3." evidence="4">
    <location>
        <begin position="202"/>
        <end position="467"/>
    </location>
</feature>
<feature type="sequence conflict" description="In Ref. 1; BAE42655." evidence="5" ref="1">
    <original>G</original>
    <variation>A</variation>
    <location>
        <position position="8"/>
    </location>
</feature>
<feature type="sequence conflict" description="In Ref. 2; AAH98476." evidence="5" ref="2">
    <original>L</original>
    <variation>P</variation>
    <location>
        <position position="26"/>
    </location>
</feature>
<feature type="sequence conflict" description="In Ref. 1; BAE37647." evidence="5" ref="1">
    <original>V</original>
    <variation>I</variation>
    <location>
        <position position="42"/>
    </location>
</feature>
<feature type="sequence conflict" description="In Ref. 1; BAE36342." evidence="5" ref="1">
    <original>H</original>
    <variation>P</variation>
    <location>
        <position position="178"/>
    </location>
</feature>
<feature type="sequence conflict" description="In Ref. 2; AAH98476." evidence="5" ref="2">
    <original>K</original>
    <variation>N</variation>
    <location>
        <position position="197"/>
    </location>
</feature>
<feature type="sequence conflict" description="In Ref. 2; AAH98476." evidence="5" ref="2">
    <original>S</original>
    <variation>P</variation>
    <location>
        <position position="266"/>
    </location>
</feature>
<feature type="sequence conflict" description="In Ref. 1; BAE42655." evidence="5" ref="1">
    <original>A</original>
    <variation>V</variation>
    <location>
        <position position="300"/>
    </location>
</feature>
<feature type="sequence conflict" description="In Ref. 1; BAC37046." evidence="5" ref="1">
    <original>R</original>
    <variation>K</variation>
    <location>
        <position position="364"/>
    </location>
</feature>
<feature type="sequence conflict" description="In Ref. 1; BAE42655." evidence="5" ref="1">
    <original>M</original>
    <variation>T</variation>
    <location>
        <position position="371"/>
    </location>
</feature>
<feature type="sequence conflict" description="In Ref. 1; BAE42655." evidence="5" ref="1">
    <original>T</original>
    <variation>S</variation>
    <location>
        <position position="377"/>
    </location>
</feature>
<feature type="sequence conflict" description="In Ref. 1; BAE42655." evidence="5" ref="1">
    <original>V</original>
    <variation>L</variation>
    <location>
        <position position="400"/>
    </location>
</feature>
<feature type="sequence conflict" description="In Ref. 1; BAE42655." evidence="5" ref="1">
    <original>M</original>
    <variation>V</variation>
    <location>
        <position position="442"/>
    </location>
</feature>
<feature type="sequence conflict" description="In Ref. 1; BAE42655." evidence="5" ref="1">
    <original>H</original>
    <variation>Y</variation>
    <location>
        <position position="451"/>
    </location>
</feature>
<proteinExistence type="evidence at protein level"/>
<reference key="1">
    <citation type="journal article" date="2005" name="Science">
        <title>The transcriptional landscape of the mammalian genome.</title>
        <authorList>
            <person name="Carninci P."/>
            <person name="Kasukawa T."/>
            <person name="Katayama S."/>
            <person name="Gough J."/>
            <person name="Frith M.C."/>
            <person name="Maeda N."/>
            <person name="Oyama R."/>
            <person name="Ravasi T."/>
            <person name="Lenhard B."/>
            <person name="Wells C."/>
            <person name="Kodzius R."/>
            <person name="Shimokawa K."/>
            <person name="Bajic V.B."/>
            <person name="Brenner S.E."/>
            <person name="Batalov S."/>
            <person name="Forrest A.R."/>
            <person name="Zavolan M."/>
            <person name="Davis M.J."/>
            <person name="Wilming L.G."/>
            <person name="Aidinis V."/>
            <person name="Allen J.E."/>
            <person name="Ambesi-Impiombato A."/>
            <person name="Apweiler R."/>
            <person name="Aturaliya R.N."/>
            <person name="Bailey T.L."/>
            <person name="Bansal M."/>
            <person name="Baxter L."/>
            <person name="Beisel K.W."/>
            <person name="Bersano T."/>
            <person name="Bono H."/>
            <person name="Chalk A.M."/>
            <person name="Chiu K.P."/>
            <person name="Choudhary V."/>
            <person name="Christoffels A."/>
            <person name="Clutterbuck D.R."/>
            <person name="Crowe M.L."/>
            <person name="Dalla E."/>
            <person name="Dalrymple B.P."/>
            <person name="de Bono B."/>
            <person name="Della Gatta G."/>
            <person name="di Bernardo D."/>
            <person name="Down T."/>
            <person name="Engstrom P."/>
            <person name="Fagiolini M."/>
            <person name="Faulkner G."/>
            <person name="Fletcher C.F."/>
            <person name="Fukushima T."/>
            <person name="Furuno M."/>
            <person name="Futaki S."/>
            <person name="Gariboldi M."/>
            <person name="Georgii-Hemming P."/>
            <person name="Gingeras T.R."/>
            <person name="Gojobori T."/>
            <person name="Green R.E."/>
            <person name="Gustincich S."/>
            <person name="Harbers M."/>
            <person name="Hayashi Y."/>
            <person name="Hensch T.K."/>
            <person name="Hirokawa N."/>
            <person name="Hill D."/>
            <person name="Huminiecki L."/>
            <person name="Iacono M."/>
            <person name="Ikeo K."/>
            <person name="Iwama A."/>
            <person name="Ishikawa T."/>
            <person name="Jakt M."/>
            <person name="Kanapin A."/>
            <person name="Katoh M."/>
            <person name="Kawasawa Y."/>
            <person name="Kelso J."/>
            <person name="Kitamura H."/>
            <person name="Kitano H."/>
            <person name="Kollias G."/>
            <person name="Krishnan S.P."/>
            <person name="Kruger A."/>
            <person name="Kummerfeld S.K."/>
            <person name="Kurochkin I.V."/>
            <person name="Lareau L.F."/>
            <person name="Lazarevic D."/>
            <person name="Lipovich L."/>
            <person name="Liu J."/>
            <person name="Liuni S."/>
            <person name="McWilliam S."/>
            <person name="Madan Babu M."/>
            <person name="Madera M."/>
            <person name="Marchionni L."/>
            <person name="Matsuda H."/>
            <person name="Matsuzawa S."/>
            <person name="Miki H."/>
            <person name="Mignone F."/>
            <person name="Miyake S."/>
            <person name="Morris K."/>
            <person name="Mottagui-Tabar S."/>
            <person name="Mulder N."/>
            <person name="Nakano N."/>
            <person name="Nakauchi H."/>
            <person name="Ng P."/>
            <person name="Nilsson R."/>
            <person name="Nishiguchi S."/>
            <person name="Nishikawa S."/>
            <person name="Nori F."/>
            <person name="Ohara O."/>
            <person name="Okazaki Y."/>
            <person name="Orlando V."/>
            <person name="Pang K.C."/>
            <person name="Pavan W.J."/>
            <person name="Pavesi G."/>
            <person name="Pesole G."/>
            <person name="Petrovsky N."/>
            <person name="Piazza S."/>
            <person name="Reed J."/>
            <person name="Reid J.F."/>
            <person name="Ring B.Z."/>
            <person name="Ringwald M."/>
            <person name="Rost B."/>
            <person name="Ruan Y."/>
            <person name="Salzberg S.L."/>
            <person name="Sandelin A."/>
            <person name="Schneider C."/>
            <person name="Schoenbach C."/>
            <person name="Sekiguchi K."/>
            <person name="Semple C.A."/>
            <person name="Seno S."/>
            <person name="Sessa L."/>
            <person name="Sheng Y."/>
            <person name="Shibata Y."/>
            <person name="Shimada H."/>
            <person name="Shimada K."/>
            <person name="Silva D."/>
            <person name="Sinclair B."/>
            <person name="Sperling S."/>
            <person name="Stupka E."/>
            <person name="Sugiura K."/>
            <person name="Sultana R."/>
            <person name="Takenaka Y."/>
            <person name="Taki K."/>
            <person name="Tammoja K."/>
            <person name="Tan S.L."/>
            <person name="Tang S."/>
            <person name="Taylor M.S."/>
            <person name="Tegner J."/>
            <person name="Teichmann S.A."/>
            <person name="Ueda H.R."/>
            <person name="van Nimwegen E."/>
            <person name="Verardo R."/>
            <person name="Wei C.L."/>
            <person name="Yagi K."/>
            <person name="Yamanishi H."/>
            <person name="Zabarovsky E."/>
            <person name="Zhu S."/>
            <person name="Zimmer A."/>
            <person name="Hide W."/>
            <person name="Bult C."/>
            <person name="Grimmond S.M."/>
            <person name="Teasdale R.D."/>
            <person name="Liu E.T."/>
            <person name="Brusic V."/>
            <person name="Quackenbush J."/>
            <person name="Wahlestedt C."/>
            <person name="Mattick J.S."/>
            <person name="Hume D.A."/>
            <person name="Kai C."/>
            <person name="Sasaki D."/>
            <person name="Tomaru Y."/>
            <person name="Fukuda S."/>
            <person name="Kanamori-Katayama M."/>
            <person name="Suzuki M."/>
            <person name="Aoki J."/>
            <person name="Arakawa T."/>
            <person name="Iida J."/>
            <person name="Imamura K."/>
            <person name="Itoh M."/>
            <person name="Kato T."/>
            <person name="Kawaji H."/>
            <person name="Kawagashira N."/>
            <person name="Kawashima T."/>
            <person name="Kojima M."/>
            <person name="Kondo S."/>
            <person name="Konno H."/>
            <person name="Nakano K."/>
            <person name="Ninomiya N."/>
            <person name="Nishio T."/>
            <person name="Okada M."/>
            <person name="Plessy C."/>
            <person name="Shibata K."/>
            <person name="Shiraki T."/>
            <person name="Suzuki S."/>
            <person name="Tagami M."/>
            <person name="Waki K."/>
            <person name="Watahiki A."/>
            <person name="Okamura-Oho Y."/>
            <person name="Suzuki H."/>
            <person name="Kawai J."/>
            <person name="Hayashizaki Y."/>
        </authorList>
    </citation>
    <scope>NUCLEOTIDE SEQUENCE [LARGE SCALE MRNA] (ISOFORMS 1; 2 AND 3)</scope>
    <source>
        <strain>C57BL/6J</strain>
        <strain>NOD</strain>
        <tissue>Hippocampus</tissue>
        <tissue>Spleen</tissue>
        <tissue>Testis</tissue>
    </source>
</reference>
<reference key="2">
    <citation type="journal article" date="2004" name="Genome Res.">
        <title>The status, quality, and expansion of the NIH full-length cDNA project: the Mammalian Gene Collection (MGC).</title>
        <authorList>
            <consortium name="The MGC Project Team"/>
        </authorList>
    </citation>
    <scope>NUCLEOTIDE SEQUENCE [LARGE SCALE MRNA] (ISOFORM 2)</scope>
    <source>
        <strain>C57BL/6J</strain>
        <tissue>Egg</tissue>
    </source>
</reference>
<reference key="3">
    <citation type="journal article" date="2010" name="Cell">
        <title>A tissue-specific atlas of mouse protein phosphorylation and expression.</title>
        <authorList>
            <person name="Huttlin E.L."/>
            <person name="Jedrychowski M.P."/>
            <person name="Elias J.E."/>
            <person name="Goswami T."/>
            <person name="Rad R."/>
            <person name="Beausoleil S.A."/>
            <person name="Villen J."/>
            <person name="Haas W."/>
            <person name="Sowa M.E."/>
            <person name="Gygi S.P."/>
        </authorList>
    </citation>
    <scope>IDENTIFICATION BY MASS SPECTROMETRY [LARGE SCALE ANALYSIS]</scope>
    <source>
        <tissue>Spleen</tissue>
        <tissue>Testis</tissue>
    </source>
</reference>
<comment type="alternative products">
    <event type="alternative splicing"/>
    <isoform>
        <id>Q8C5P5-1</id>
        <name>1</name>
        <sequence type="displayed"/>
    </isoform>
    <isoform>
        <id>Q8C5P5-2</id>
        <name>2</name>
        <sequence type="described" ref="VSP_019948"/>
    </isoform>
    <isoform>
        <id>Q8C5P5-3</id>
        <name>3</name>
        <sequence type="described" ref="VSP_019949 VSP_019950"/>
    </isoform>
</comment>
<comment type="similarity">
    <text evidence="5">Belongs to the 5'(3')-deoxyribonucleotidase family.</text>
</comment>
<name>NT5D1_MOUSE</name>
<sequence>MAQHFSLGACDVVGFDLDHTLCRYNLPESARLIYNSFAQFLVKEKGYDEGLLTLTPEDWDFCCKGLALDLEDGTFIKLAADGTVLRASHGTKMMTPEALTEAFGKKEWRHCVSDKRCTSDKPGVSDIPCCSGKCYFYDNYFDLPGALLCARVVDSLTKQNRGQKTFDFWKDVVAGIQHNFKMSAFKENCGFFFPEIKRNLGKYVHRCPESVRKWLRQLKDAGKITMLITSSHSDYCKLLGSYILGEDFADLFDIVITNALKPGFFSHFPSQRPFYTLENDEEKDELPSLDKPGWYSQGNAAHLYELLKKMTSKPEPKVVYFGDSMHSDIFPAHHYTNWETVLILEELQGPEMEKPEEAEPLEKRGKYEAPMVKPLNTLSNKWGSYFIDSVSGRGRAEDSVVYTWSSKRISTYSTIAIPNIESIAELPLDYKFTRFSTNNSKMAGYYPLVHHTLGSQDTDSKIISTEK</sequence>
<dbReference type="EC" id="3.1.3.-"/>
<dbReference type="EMBL" id="AK077876">
    <property type="protein sequence ID" value="BAC37046.1"/>
    <property type="molecule type" value="mRNA"/>
</dbReference>
<dbReference type="EMBL" id="AK145666">
    <property type="protein sequence ID" value="BAE26577.1"/>
    <property type="molecule type" value="mRNA"/>
</dbReference>
<dbReference type="EMBL" id="AK161350">
    <property type="protein sequence ID" value="BAE36342.1"/>
    <property type="molecule type" value="mRNA"/>
</dbReference>
<dbReference type="EMBL" id="AK164144">
    <property type="protein sequence ID" value="BAE37647.1"/>
    <property type="molecule type" value="mRNA"/>
</dbReference>
<dbReference type="EMBL" id="AK171761">
    <property type="protein sequence ID" value="BAE42655.1"/>
    <property type="molecule type" value="mRNA"/>
</dbReference>
<dbReference type="EMBL" id="BC098476">
    <property type="protein sequence ID" value="AAH98476.1"/>
    <property type="molecule type" value="mRNA"/>
</dbReference>
<dbReference type="CCDS" id="CCDS23779.1">
    <molecule id="Q8C5P5-1"/>
</dbReference>
<dbReference type="RefSeq" id="NP_001334392.1">
    <property type="nucleotide sequence ID" value="NM_001347463.1"/>
</dbReference>
<dbReference type="RefSeq" id="NP_795942.2">
    <molecule id="Q8C5P5-1"/>
    <property type="nucleotide sequence ID" value="NM_176968.5"/>
</dbReference>
<dbReference type="SMR" id="Q8C5P5"/>
<dbReference type="BioGRID" id="235414">
    <property type="interactions" value="1"/>
</dbReference>
<dbReference type="FunCoup" id="Q8C5P5">
    <property type="interactions" value="58"/>
</dbReference>
<dbReference type="STRING" id="10090.ENSMUSP00000047126"/>
<dbReference type="iPTMnet" id="Q8C5P5"/>
<dbReference type="PhosphoSitePlus" id="Q8C5P5"/>
<dbReference type="SwissPalm" id="Q8C5P5"/>
<dbReference type="PaxDb" id="10090-ENSMUSP00000047126"/>
<dbReference type="ProteomicsDB" id="295533">
    <molecule id="Q8C5P5-1"/>
</dbReference>
<dbReference type="ProteomicsDB" id="295534">
    <molecule id="Q8C5P5-2"/>
</dbReference>
<dbReference type="ProteomicsDB" id="295535">
    <molecule id="Q8C5P5-3"/>
</dbReference>
<dbReference type="Pumba" id="Q8C5P5"/>
<dbReference type="Antibodypedia" id="32478">
    <property type="antibodies" value="212 antibodies from 16 providers"/>
</dbReference>
<dbReference type="DNASU" id="319638"/>
<dbReference type="Ensembl" id="ENSMUST00000047885.14">
    <molecule id="Q8C5P5-1"/>
    <property type="protein sequence ID" value="ENSMUSP00000047126.8"/>
    <property type="gene ID" value="ENSMUSG00000039480.15"/>
</dbReference>
<dbReference type="Ensembl" id="ENSMUST00000105512.8">
    <molecule id="Q8C5P5-2"/>
    <property type="protein sequence ID" value="ENSMUSP00000101151.2"/>
    <property type="gene ID" value="ENSMUSG00000039480.15"/>
</dbReference>
<dbReference type="GeneID" id="319638"/>
<dbReference type="KEGG" id="mmu:319638"/>
<dbReference type="UCSC" id="uc007euv.1">
    <molecule id="Q8C5P5-1"/>
    <property type="organism name" value="mouse"/>
</dbReference>
<dbReference type="UCSC" id="uc007euw.1">
    <molecule id="Q8C5P5-2"/>
    <property type="organism name" value="mouse"/>
</dbReference>
<dbReference type="AGR" id="MGI:2442446"/>
<dbReference type="CTD" id="221294"/>
<dbReference type="MGI" id="MGI:2442446">
    <property type="gene designation" value="Nt5dc1"/>
</dbReference>
<dbReference type="VEuPathDB" id="HostDB:ENSMUSG00000039480"/>
<dbReference type="eggNOG" id="KOG2469">
    <property type="taxonomic scope" value="Eukaryota"/>
</dbReference>
<dbReference type="GeneTree" id="ENSGT00940000155676"/>
<dbReference type="HOGENOM" id="CLU_029966_0_0_1"/>
<dbReference type="InParanoid" id="Q8C5P5"/>
<dbReference type="OMA" id="ICSNPYG"/>
<dbReference type="OrthoDB" id="6503940at2759"/>
<dbReference type="PhylomeDB" id="Q8C5P5"/>
<dbReference type="TreeFam" id="TF325912"/>
<dbReference type="BioGRID-ORCS" id="319638">
    <property type="hits" value="2 hits in 77 CRISPR screens"/>
</dbReference>
<dbReference type="PRO" id="PR:Q8C5P5"/>
<dbReference type="Proteomes" id="UP000000589">
    <property type="component" value="Chromosome 10"/>
</dbReference>
<dbReference type="RNAct" id="Q8C5P5">
    <property type="molecule type" value="protein"/>
</dbReference>
<dbReference type="Bgee" id="ENSMUSG00000039480">
    <property type="expression patterns" value="Expressed in choroid plexus epithelium and 203 other cell types or tissues"/>
</dbReference>
<dbReference type="ExpressionAtlas" id="Q8C5P5">
    <property type="expression patterns" value="baseline and differential"/>
</dbReference>
<dbReference type="GO" id="GO:0016787">
    <property type="term" value="F:hydrolase activity"/>
    <property type="evidence" value="ECO:0007669"/>
    <property type="project" value="UniProtKB-KW"/>
</dbReference>
<dbReference type="GO" id="GO:0046872">
    <property type="term" value="F:metal ion binding"/>
    <property type="evidence" value="ECO:0007669"/>
    <property type="project" value="UniProtKB-KW"/>
</dbReference>
<dbReference type="FunFam" id="3.40.50.1000:FF:000086">
    <property type="entry name" value="LD24878p"/>
    <property type="match status" value="1"/>
</dbReference>
<dbReference type="Gene3D" id="3.40.50.1000">
    <property type="entry name" value="HAD superfamily/HAD-like"/>
    <property type="match status" value="1"/>
</dbReference>
<dbReference type="InterPro" id="IPR036412">
    <property type="entry name" value="HAD-like_sf"/>
</dbReference>
<dbReference type="InterPro" id="IPR008380">
    <property type="entry name" value="HAD-SF_hydro_IG_5-nucl"/>
</dbReference>
<dbReference type="InterPro" id="IPR023214">
    <property type="entry name" value="HAD_sf"/>
</dbReference>
<dbReference type="PANTHER" id="PTHR12103">
    <property type="entry name" value="5'-NUCLEOTIDASE DOMAIN-CONTAINING"/>
    <property type="match status" value="1"/>
</dbReference>
<dbReference type="PANTHER" id="PTHR12103:SF38">
    <property type="entry name" value="5'-NUCLEOTIDASE DOMAIN-CONTAINING PROTEIN 1"/>
    <property type="match status" value="1"/>
</dbReference>
<dbReference type="Pfam" id="PF05761">
    <property type="entry name" value="5_nucleotid"/>
    <property type="match status" value="1"/>
</dbReference>
<dbReference type="SUPFAM" id="SSF56784">
    <property type="entry name" value="HAD-like"/>
    <property type="match status" value="1"/>
</dbReference>
<evidence type="ECO:0000250" key="1"/>
<evidence type="ECO:0000250" key="2">
    <source>
        <dbReference type="UniProtKB" id="Q5TFE4"/>
    </source>
</evidence>
<evidence type="ECO:0000303" key="3">
    <source>
    </source>
</evidence>
<evidence type="ECO:0000303" key="4">
    <source>
    </source>
</evidence>
<evidence type="ECO:0000305" key="5"/>
<keyword id="KW-0007">Acetylation</keyword>
<keyword id="KW-0025">Alternative splicing</keyword>
<keyword id="KW-0378">Hydrolase</keyword>
<keyword id="KW-0460">Magnesium</keyword>
<keyword id="KW-0479">Metal-binding</keyword>
<keyword id="KW-1185">Reference proteome</keyword>
<gene>
    <name type="primary">Nt5dc1</name>
    <name type="synonym">Nt5c2l1</name>
</gene>
<organism>
    <name type="scientific">Mus musculus</name>
    <name type="common">Mouse</name>
    <dbReference type="NCBI Taxonomy" id="10090"/>
    <lineage>
        <taxon>Eukaryota</taxon>
        <taxon>Metazoa</taxon>
        <taxon>Chordata</taxon>
        <taxon>Craniata</taxon>
        <taxon>Vertebrata</taxon>
        <taxon>Euteleostomi</taxon>
        <taxon>Mammalia</taxon>
        <taxon>Eutheria</taxon>
        <taxon>Euarchontoglires</taxon>
        <taxon>Glires</taxon>
        <taxon>Rodentia</taxon>
        <taxon>Myomorpha</taxon>
        <taxon>Muroidea</taxon>
        <taxon>Muridae</taxon>
        <taxon>Murinae</taxon>
        <taxon>Mus</taxon>
        <taxon>Mus</taxon>
    </lineage>
</organism>
<protein>
    <recommendedName>
        <fullName>5'-nucleotidase domain-containing protein 1</fullName>
        <ecNumber>3.1.3.-</ecNumber>
    </recommendedName>
    <alternativeName>
        <fullName>Cytosolic 5'-nucleotidase II-like protein 1</fullName>
    </alternativeName>
</protein>